<sequence>MRVLSLFLKDFRNYTDLRLELGPEMNSIFGLNAQGKTNLLEALYILSLGRSFRTSRLTDAIRFGASHFFIEAVFSHKEVFHTLSIQVDKKGKKILFDGAPITKLSELVGLFPVILFSIKDIAIIEGSPSERRRFLDLLLAQASDKYTEHISLYHKALDQRNASIKAQNQKAISAWNSPLIAYGSLVAFLRNECTKKLNTIFQTLWDNTLKETLSLRYESSLITEESPTLNDIASNYYEQLRIANTKDLDLGYTMVGPHRDELLLTINDLPVAKFSSEGQKHSLLAVLRFAECVYLQEEFCIHPLLCMDDIHACLDQQRLDQLLQLSNSLGQVVTTSTICPDHRSTTSCIFHVTQAQVSLVAPQSL</sequence>
<gene>
    <name evidence="1" type="primary">recF</name>
    <name type="ordered locus">CTL0330</name>
</gene>
<protein>
    <recommendedName>
        <fullName evidence="1">DNA replication and repair protein RecF</fullName>
    </recommendedName>
</protein>
<feature type="chain" id="PRO_1000121094" description="DNA replication and repair protein RecF">
    <location>
        <begin position="1"/>
        <end position="365"/>
    </location>
</feature>
<feature type="binding site" evidence="1">
    <location>
        <begin position="30"/>
        <end position="37"/>
    </location>
    <ligand>
        <name>ATP</name>
        <dbReference type="ChEBI" id="CHEBI:30616"/>
    </ligand>
</feature>
<keyword id="KW-0067">ATP-binding</keyword>
<keyword id="KW-0963">Cytoplasm</keyword>
<keyword id="KW-0227">DNA damage</keyword>
<keyword id="KW-0234">DNA repair</keyword>
<keyword id="KW-0235">DNA replication</keyword>
<keyword id="KW-0238">DNA-binding</keyword>
<keyword id="KW-0547">Nucleotide-binding</keyword>
<keyword id="KW-0742">SOS response</keyword>
<comment type="function">
    <text evidence="1">The RecF protein is involved in DNA metabolism; it is required for DNA replication and normal SOS inducibility. RecF binds preferentially to single-stranded, linear DNA. It also seems to bind ATP.</text>
</comment>
<comment type="subcellular location">
    <subcellularLocation>
        <location evidence="1">Cytoplasm</location>
    </subcellularLocation>
</comment>
<comment type="similarity">
    <text evidence="1">Belongs to the RecF family.</text>
</comment>
<name>RECF_CHLT2</name>
<reference key="1">
    <citation type="journal article" date="2008" name="Genome Res.">
        <title>Chlamydia trachomatis: genome sequence analysis of lymphogranuloma venereum isolates.</title>
        <authorList>
            <person name="Thomson N.R."/>
            <person name="Holden M.T.G."/>
            <person name="Carder C."/>
            <person name="Lennard N."/>
            <person name="Lockey S.J."/>
            <person name="Marsh P."/>
            <person name="Skipp P."/>
            <person name="O'Connor C.D."/>
            <person name="Goodhead I."/>
            <person name="Norbertzcak H."/>
            <person name="Harris B."/>
            <person name="Ormond D."/>
            <person name="Rance R."/>
            <person name="Quail M.A."/>
            <person name="Parkhill J."/>
            <person name="Stephens R.S."/>
            <person name="Clarke I.N."/>
        </authorList>
    </citation>
    <scope>NUCLEOTIDE SEQUENCE [LARGE SCALE GENOMIC DNA]</scope>
    <source>
        <strain>ATCC VR-902B / DSM 19102 / 434/Bu</strain>
    </source>
</reference>
<evidence type="ECO:0000255" key="1">
    <source>
        <dbReference type="HAMAP-Rule" id="MF_00365"/>
    </source>
</evidence>
<organism>
    <name type="scientific">Chlamydia trachomatis serovar L2 (strain ATCC VR-902B / DSM 19102 / 434/Bu)</name>
    <dbReference type="NCBI Taxonomy" id="471472"/>
    <lineage>
        <taxon>Bacteria</taxon>
        <taxon>Pseudomonadati</taxon>
        <taxon>Chlamydiota</taxon>
        <taxon>Chlamydiia</taxon>
        <taxon>Chlamydiales</taxon>
        <taxon>Chlamydiaceae</taxon>
        <taxon>Chlamydia/Chlamydophila group</taxon>
        <taxon>Chlamydia</taxon>
    </lineage>
</organism>
<accession>B0B9I2</accession>
<proteinExistence type="inferred from homology"/>
<dbReference type="EMBL" id="AM884176">
    <property type="protein sequence ID" value="CAP03769.1"/>
    <property type="molecule type" value="Genomic_DNA"/>
</dbReference>
<dbReference type="RefSeq" id="WP_009871423.1">
    <property type="nucleotide sequence ID" value="NC_010287.1"/>
</dbReference>
<dbReference type="RefSeq" id="YP_001654413.1">
    <property type="nucleotide sequence ID" value="NC_010287.1"/>
</dbReference>
<dbReference type="SMR" id="B0B9I2"/>
<dbReference type="KEGG" id="ctb:CTL0330"/>
<dbReference type="PATRIC" id="fig|471472.4.peg.357"/>
<dbReference type="HOGENOM" id="CLU_040267_0_1_0"/>
<dbReference type="Proteomes" id="UP001154402">
    <property type="component" value="Chromosome"/>
</dbReference>
<dbReference type="GO" id="GO:0005737">
    <property type="term" value="C:cytoplasm"/>
    <property type="evidence" value="ECO:0007669"/>
    <property type="project" value="UniProtKB-SubCell"/>
</dbReference>
<dbReference type="GO" id="GO:0005524">
    <property type="term" value="F:ATP binding"/>
    <property type="evidence" value="ECO:0007669"/>
    <property type="project" value="UniProtKB-UniRule"/>
</dbReference>
<dbReference type="GO" id="GO:0003697">
    <property type="term" value="F:single-stranded DNA binding"/>
    <property type="evidence" value="ECO:0007669"/>
    <property type="project" value="UniProtKB-UniRule"/>
</dbReference>
<dbReference type="GO" id="GO:0006260">
    <property type="term" value="P:DNA replication"/>
    <property type="evidence" value="ECO:0007669"/>
    <property type="project" value="UniProtKB-UniRule"/>
</dbReference>
<dbReference type="GO" id="GO:0000731">
    <property type="term" value="P:DNA synthesis involved in DNA repair"/>
    <property type="evidence" value="ECO:0007669"/>
    <property type="project" value="TreeGrafter"/>
</dbReference>
<dbReference type="GO" id="GO:0006302">
    <property type="term" value="P:double-strand break repair"/>
    <property type="evidence" value="ECO:0007669"/>
    <property type="project" value="TreeGrafter"/>
</dbReference>
<dbReference type="GO" id="GO:0009432">
    <property type="term" value="P:SOS response"/>
    <property type="evidence" value="ECO:0007669"/>
    <property type="project" value="UniProtKB-UniRule"/>
</dbReference>
<dbReference type="Gene3D" id="3.40.50.300">
    <property type="entry name" value="P-loop containing nucleotide triphosphate hydrolases"/>
    <property type="match status" value="1"/>
</dbReference>
<dbReference type="Gene3D" id="1.20.1050.90">
    <property type="entry name" value="RecF/RecN/SMC, N-terminal domain"/>
    <property type="match status" value="1"/>
</dbReference>
<dbReference type="HAMAP" id="MF_00365">
    <property type="entry name" value="RecF"/>
    <property type="match status" value="1"/>
</dbReference>
<dbReference type="InterPro" id="IPR001238">
    <property type="entry name" value="DNA-binding_RecF"/>
</dbReference>
<dbReference type="InterPro" id="IPR018078">
    <property type="entry name" value="DNA-binding_RecF_CS"/>
</dbReference>
<dbReference type="InterPro" id="IPR027417">
    <property type="entry name" value="P-loop_NTPase"/>
</dbReference>
<dbReference type="InterPro" id="IPR003395">
    <property type="entry name" value="RecF/RecN/SMC_N"/>
</dbReference>
<dbReference type="InterPro" id="IPR042174">
    <property type="entry name" value="RecF_2"/>
</dbReference>
<dbReference type="NCBIfam" id="TIGR00611">
    <property type="entry name" value="recf"/>
    <property type="match status" value="1"/>
</dbReference>
<dbReference type="PANTHER" id="PTHR32182">
    <property type="entry name" value="DNA REPLICATION AND REPAIR PROTEIN RECF"/>
    <property type="match status" value="1"/>
</dbReference>
<dbReference type="PANTHER" id="PTHR32182:SF0">
    <property type="entry name" value="DNA REPLICATION AND REPAIR PROTEIN RECF"/>
    <property type="match status" value="1"/>
</dbReference>
<dbReference type="Pfam" id="PF02463">
    <property type="entry name" value="SMC_N"/>
    <property type="match status" value="1"/>
</dbReference>
<dbReference type="SUPFAM" id="SSF52540">
    <property type="entry name" value="P-loop containing nucleoside triphosphate hydrolases"/>
    <property type="match status" value="1"/>
</dbReference>
<dbReference type="PROSITE" id="PS00617">
    <property type="entry name" value="RECF_1"/>
    <property type="match status" value="1"/>
</dbReference>
<dbReference type="PROSITE" id="PS00618">
    <property type="entry name" value="RECF_2"/>
    <property type="match status" value="1"/>
</dbReference>